<organism>
    <name type="scientific">Chaetomium globosum (strain ATCC 6205 / CBS 148.51 / DSM 1962 / NBRC 6347 / NRRL 1970)</name>
    <name type="common">Soil fungus</name>
    <dbReference type="NCBI Taxonomy" id="306901"/>
    <lineage>
        <taxon>Eukaryota</taxon>
        <taxon>Fungi</taxon>
        <taxon>Dikarya</taxon>
        <taxon>Ascomycota</taxon>
        <taxon>Pezizomycotina</taxon>
        <taxon>Sordariomycetes</taxon>
        <taxon>Sordariomycetidae</taxon>
        <taxon>Sordariales</taxon>
        <taxon>Chaetomiaceae</taxon>
        <taxon>Chaetomium</taxon>
    </lineage>
</organism>
<evidence type="ECO:0000250" key="1"/>
<evidence type="ECO:0000305" key="2"/>
<feature type="chain" id="PRO_0000343088" description="Exportin-T">
    <location>
        <begin position="1"/>
        <end position="1019"/>
    </location>
</feature>
<name>XPOT_CHAGB</name>
<reference key="1">
    <citation type="journal article" date="2015" name="Genome Announc.">
        <title>Draft genome sequence of the cellulolytic fungus Chaetomium globosum.</title>
        <authorList>
            <person name="Cuomo C.A."/>
            <person name="Untereiner W.A."/>
            <person name="Ma L.-J."/>
            <person name="Grabherr M."/>
            <person name="Birren B.W."/>
        </authorList>
    </citation>
    <scope>NUCLEOTIDE SEQUENCE [LARGE SCALE GENOMIC DNA]</scope>
    <source>
        <strain>ATCC 6205 / CBS 148.51 / DSM 1962 / NBRC 6347 / NRRL 1970</strain>
    </source>
</reference>
<gene>
    <name type="primary">LOS1</name>
    <name type="ORF">CHGG_05646</name>
</gene>
<sequence>MDAQIENAIEIAWDPTSDQALKGQAFEFLNQLRTDPQAWQVCIAIFTRTPRTSPVVRLVCLEIVNHAVSSQILDGQGLGFLKQSLLEYVGRVYSGDAQDQVDPAHLQNKLTQTLTYLFVGLYKEGWESFIDDFLALAQKENNLPGVVMYLRILGSIHDEIADLMLSRSDNEARRNNDLKDLIRERDMQKIAQSWQDLLARYSHQNDGVVETTLKTIGKWVSWIDIHLVINQEMISLVLPLVGRTHAAGSGDKVRDAAVDTFTEIVAKKMKPSDKAEMITFLNLREIVSQLLASPPLNEWKGTPRYDTDLAEAVAKLVNTLVADVVRVLEDGKVDNDTRGKAEQLLRDFLPSLLRLFSDEYDEVCSTVIPSLTDLLTFLRKVGQLPPTYSEMLPPILNAIVSKMRYDETSNWGNEDEQTDEAEFQELRKKLQILQKSVASVDENLCIDLLSNLVANMFSTLEQQGSQMDWRDLDLALHEIYLFGELALPNTGLAQKSQPNPLAAERLAVMMSKMVESGIANYHHPAILLQYMEICTRYYSFFEDQQRYIPQVLENFVRLVHHDHVRIRTRSWYLFHRFVKTLRAQVGNVAKTVIESISDLLPIKAEVPGNDADDDMSSDESDHSADAVFSSQLFLYEAIGCISSTSATPPADQGLYARSVMEPLFSDMSVHIERAKAGDPQAVLQVHHIIMALGTLANGFADAHAAQQGKRPQPHEAVSNEFSRAAEAILIALNELNAIGDVRAACRSAFSRLLGVLGAAVLPQLPQWIEGLLSRSSSNDEMAMFLRLLEQVVYNFKSEIYNILDVLLTPLLQRVFSGLSDPINGTDDEIQLQELRREFVSFVQVILHNELGGVLVSASNQGTFESLISSIIDIAKTLTHGNLVASRVAFNVLSRMASQWGGPDVATIGENPMTTGAPAPAIPGFDQFMIEHFHGLCWTVLQDGGFRPNTDAQSRQILNEIAGIQQVIYSKTGDAFVNHLQGVTFPQLGIDGTEYLRLLTTSREKKPVVTWLLGLLKGRR</sequence>
<protein>
    <recommendedName>
        <fullName>Exportin-T</fullName>
    </recommendedName>
    <alternativeName>
        <fullName>Exportin(tRNA)</fullName>
    </alternativeName>
    <alternativeName>
        <fullName>Karyopherin-beta</fullName>
    </alternativeName>
    <alternativeName>
        <fullName>tRNA exportin</fullName>
    </alternativeName>
</protein>
<dbReference type="EMBL" id="CH408031">
    <property type="protein sequence ID" value="EAQ89027.1"/>
    <property type="molecule type" value="Genomic_DNA"/>
</dbReference>
<dbReference type="RefSeq" id="XP_001221741.1">
    <property type="nucleotide sequence ID" value="XM_001221740.1"/>
</dbReference>
<dbReference type="SMR" id="Q2H6R9"/>
<dbReference type="FunCoup" id="Q2H6R9">
    <property type="interactions" value="929"/>
</dbReference>
<dbReference type="STRING" id="306901.Q2H6R9"/>
<dbReference type="GeneID" id="4390917"/>
<dbReference type="VEuPathDB" id="FungiDB:CHGG_05646"/>
<dbReference type="eggNOG" id="KOG2021">
    <property type="taxonomic scope" value="Eukaryota"/>
</dbReference>
<dbReference type="HOGENOM" id="CLU_004414_0_1_1"/>
<dbReference type="InParanoid" id="Q2H6R9"/>
<dbReference type="OMA" id="HEMFLFG"/>
<dbReference type="OrthoDB" id="26399at2759"/>
<dbReference type="Proteomes" id="UP000001056">
    <property type="component" value="Unassembled WGS sequence"/>
</dbReference>
<dbReference type="GO" id="GO:0005737">
    <property type="term" value="C:cytoplasm"/>
    <property type="evidence" value="ECO:0007669"/>
    <property type="project" value="UniProtKB-SubCell"/>
</dbReference>
<dbReference type="GO" id="GO:0016363">
    <property type="term" value="C:nuclear matrix"/>
    <property type="evidence" value="ECO:0007669"/>
    <property type="project" value="TreeGrafter"/>
</dbReference>
<dbReference type="GO" id="GO:0005643">
    <property type="term" value="C:nuclear pore"/>
    <property type="evidence" value="ECO:0007669"/>
    <property type="project" value="TreeGrafter"/>
</dbReference>
<dbReference type="GO" id="GO:0031267">
    <property type="term" value="F:small GTPase binding"/>
    <property type="evidence" value="ECO:0007669"/>
    <property type="project" value="InterPro"/>
</dbReference>
<dbReference type="GO" id="GO:0000049">
    <property type="term" value="F:tRNA binding"/>
    <property type="evidence" value="ECO:0007669"/>
    <property type="project" value="UniProtKB-KW"/>
</dbReference>
<dbReference type="GO" id="GO:0008033">
    <property type="term" value="P:tRNA processing"/>
    <property type="evidence" value="ECO:0007669"/>
    <property type="project" value="UniProtKB-KW"/>
</dbReference>
<dbReference type="GO" id="GO:0071528">
    <property type="term" value="P:tRNA re-export from nucleus"/>
    <property type="evidence" value="ECO:0007669"/>
    <property type="project" value="InterPro"/>
</dbReference>
<dbReference type="FunFam" id="1.25.10.10:FF:000355">
    <property type="entry name" value="Exportin-T"/>
    <property type="match status" value="1"/>
</dbReference>
<dbReference type="Gene3D" id="1.25.10.10">
    <property type="entry name" value="Leucine-rich Repeat Variant"/>
    <property type="match status" value="1"/>
</dbReference>
<dbReference type="InterPro" id="IPR011989">
    <property type="entry name" value="ARM-like"/>
</dbReference>
<dbReference type="InterPro" id="IPR016024">
    <property type="entry name" value="ARM-type_fold"/>
</dbReference>
<dbReference type="InterPro" id="IPR013598">
    <property type="entry name" value="Exportin-1/Importin-b-like"/>
</dbReference>
<dbReference type="InterPro" id="IPR045546">
    <property type="entry name" value="Exportin-T_C"/>
</dbReference>
<dbReference type="InterPro" id="IPR040017">
    <property type="entry name" value="XPOT"/>
</dbReference>
<dbReference type="PANTHER" id="PTHR15952:SF11">
    <property type="entry name" value="EXPORTIN-T"/>
    <property type="match status" value="1"/>
</dbReference>
<dbReference type="PANTHER" id="PTHR15952">
    <property type="entry name" value="EXPORTIN-T/LOS1"/>
    <property type="match status" value="1"/>
</dbReference>
<dbReference type="Pfam" id="PF19282">
    <property type="entry name" value="Exportin-T"/>
    <property type="match status" value="1"/>
</dbReference>
<dbReference type="Pfam" id="PF08389">
    <property type="entry name" value="Xpo1"/>
    <property type="match status" value="1"/>
</dbReference>
<dbReference type="SUPFAM" id="SSF48371">
    <property type="entry name" value="ARM repeat"/>
    <property type="match status" value="1"/>
</dbReference>
<proteinExistence type="inferred from homology"/>
<keyword id="KW-0963">Cytoplasm</keyword>
<keyword id="KW-0539">Nucleus</keyword>
<keyword id="KW-1185">Reference proteome</keyword>
<keyword id="KW-0694">RNA-binding</keyword>
<keyword id="KW-0813">Transport</keyword>
<keyword id="KW-0819">tRNA processing</keyword>
<keyword id="KW-0820">tRNA-binding</keyword>
<accession>Q2H6R9</accession>
<comment type="function">
    <text evidence="1">tRNA nucleus export receptor which facilitates tRNA translocation across the nuclear pore complex. Involved in pre-tRNA splicing, probably by affecting the interaction of pre-tRNA with splicing endonuclease (By similarity).</text>
</comment>
<comment type="subcellular location">
    <subcellularLocation>
        <location evidence="1">Nucleus</location>
    </subcellularLocation>
    <subcellularLocation>
        <location evidence="1">Cytoplasm</location>
    </subcellularLocation>
    <text evidence="1">Shuttles between the nucleus and the cytoplasm.</text>
</comment>
<comment type="similarity">
    <text evidence="2">Belongs to the exportin family.</text>
</comment>